<dbReference type="EMBL" id="X68495">
    <property type="protein sequence ID" value="CAA48509.1"/>
    <property type="molecule type" value="Genomic_RNA"/>
</dbReference>
<dbReference type="EMBL" id="Z29337">
    <property type="protein sequence ID" value="CAA82536.1"/>
    <property type="molecule type" value="Genomic_RNA"/>
</dbReference>
<dbReference type="PIR" id="S44049">
    <property type="entry name" value="S44049"/>
</dbReference>
<dbReference type="SMR" id="P35263"/>
<dbReference type="IntAct" id="P35263">
    <property type="interactions" value="1"/>
</dbReference>
<dbReference type="Proteomes" id="UP000007772">
    <property type="component" value="Genome"/>
</dbReference>
<dbReference type="GO" id="GO:0019029">
    <property type="term" value="C:helical viral capsid"/>
    <property type="evidence" value="ECO:0007669"/>
    <property type="project" value="UniProtKB-KW"/>
</dbReference>
<dbReference type="GO" id="GO:0030430">
    <property type="term" value="C:host cell cytoplasm"/>
    <property type="evidence" value="ECO:0007669"/>
    <property type="project" value="UniProtKB-SubCell"/>
</dbReference>
<dbReference type="GO" id="GO:1990904">
    <property type="term" value="C:ribonucleoprotein complex"/>
    <property type="evidence" value="ECO:0007669"/>
    <property type="project" value="UniProtKB-KW"/>
</dbReference>
<dbReference type="GO" id="GO:0019013">
    <property type="term" value="C:viral nucleocapsid"/>
    <property type="evidence" value="ECO:0007669"/>
    <property type="project" value="UniProtKB-KW"/>
</dbReference>
<dbReference type="GO" id="GO:0003723">
    <property type="term" value="F:RNA binding"/>
    <property type="evidence" value="ECO:0007669"/>
    <property type="project" value="UniProtKB-KW"/>
</dbReference>
<dbReference type="GO" id="GO:0039702">
    <property type="term" value="P:viral budding via host ESCRT complex"/>
    <property type="evidence" value="ECO:0007669"/>
    <property type="project" value="UniProtKB-KW"/>
</dbReference>
<dbReference type="GO" id="GO:0019074">
    <property type="term" value="P:viral RNA genome packaging"/>
    <property type="evidence" value="ECO:0007669"/>
    <property type="project" value="InterPro"/>
</dbReference>
<dbReference type="InterPro" id="IPR008609">
    <property type="entry name" value="Ebola_NP"/>
</dbReference>
<dbReference type="Pfam" id="PF05505">
    <property type="entry name" value="Ebola_NP"/>
    <property type="match status" value="1"/>
</dbReference>
<dbReference type="PIRSF" id="PIRSF003900">
    <property type="entry name" value="N_FiloV"/>
    <property type="match status" value="1"/>
</dbReference>
<evidence type="ECO:0000250" key="1"/>
<evidence type="ECO:0000255" key="2"/>
<evidence type="ECO:0000256" key="3">
    <source>
        <dbReference type="SAM" id="MobiDB-lite"/>
    </source>
</evidence>
<evidence type="ECO:0000305" key="4"/>
<organismHost>
    <name type="scientific">Chlorocebus aethiops</name>
    <name type="common">Green monkey</name>
    <name type="synonym">Cercopithecus aethiops</name>
    <dbReference type="NCBI Taxonomy" id="9534"/>
</organismHost>
<organismHost>
    <name type="scientific">Homo sapiens</name>
    <name type="common">Human</name>
    <dbReference type="NCBI Taxonomy" id="9606"/>
</organismHost>
<organismHost>
    <name type="scientific">Rousettus aegyptiacus</name>
    <name type="common">Egyptian fruit bat</name>
    <name type="synonym">Pteropus aegyptiacus</name>
    <dbReference type="NCBI Taxonomy" id="9407"/>
</organismHost>
<organism>
    <name type="scientific">Lake Victoria marburgvirus (strain Popp-67)</name>
    <name type="common">MARV</name>
    <name type="synonym">Marburg virus (strain West Germany/Popp/1967)</name>
    <dbReference type="NCBI Taxonomy" id="33728"/>
    <lineage>
        <taxon>Viruses</taxon>
        <taxon>Riboviria</taxon>
        <taxon>Orthornavirae</taxon>
        <taxon>Negarnaviricota</taxon>
        <taxon>Haploviricotina</taxon>
        <taxon>Monjiviricetes</taxon>
        <taxon>Mononegavirales</taxon>
        <taxon>Filoviridae</taxon>
        <taxon>Orthomarburgvirus</taxon>
        <taxon>Orthomarburgvirus marburgense</taxon>
    </lineage>
</organism>
<feature type="chain" id="PRO_0000222176" description="Nucleoprotein">
    <location>
        <begin position="1"/>
        <end position="695"/>
    </location>
</feature>
<feature type="region of interest" description="Disordered" evidence="3">
    <location>
        <begin position="423"/>
        <end position="458"/>
    </location>
</feature>
<feature type="region of interest" description="Disordered" evidence="3">
    <location>
        <begin position="483"/>
        <end position="515"/>
    </location>
</feature>
<feature type="region of interest" description="Disordered" evidence="3">
    <location>
        <begin position="527"/>
        <end position="612"/>
    </location>
</feature>
<feature type="coiled-coil region" evidence="2">
    <location>
        <begin position="316"/>
        <end position="341"/>
    </location>
</feature>
<feature type="coiled-coil region" evidence="2">
    <location>
        <begin position="372"/>
        <end position="399"/>
    </location>
</feature>
<feature type="short sequence motif" description="PTAP/PSAP motif" evidence="1">
    <location>
        <begin position="603"/>
        <end position="606"/>
    </location>
</feature>
<feature type="compositionally biased region" description="Polar residues" evidence="3">
    <location>
        <begin position="495"/>
        <end position="505"/>
    </location>
</feature>
<feature type="compositionally biased region" description="Polar residues" evidence="3">
    <location>
        <begin position="537"/>
        <end position="552"/>
    </location>
</feature>
<reference key="1">
    <citation type="journal article" date="1995" name="Arch. Virol.">
        <title>The complete nucleotide sequence of the Popp (1967) strain of Marburg virus: a comparison with the Musoke (1980) strain.</title>
        <authorList>
            <person name="Bukreyev A.A."/>
            <person name="Volchkov V.E."/>
            <person name="Blinov V.M."/>
            <person name="Dryga S.A."/>
            <person name="Netesov S.V."/>
        </authorList>
    </citation>
    <scope>NUCLEOTIDE SEQUENCE [GENOMIC RNA]</scope>
</reference>
<protein>
    <recommendedName>
        <fullName>Nucleoprotein</fullName>
    </recommendedName>
    <alternativeName>
        <fullName>Nucleocapsid protein</fullName>
        <shortName>Protein N</shortName>
    </alternativeName>
</protein>
<comment type="function">
    <text evidence="1">Encapsidates the genome, protecting it from nucleases. The encapsidated genomic RNA is termed the nucleocapsid and serves as template for transcription and replication. During replication, encapsidation by NP is coupled to RNA synthesis and all replicative products are resistant to nucleases (By similarity).</text>
</comment>
<comment type="subunit">
    <text evidence="1">Homooligomer. Homomultimerizes to form the nucleocapsid. Binds to viral genomic RNA. Interacts with VP35 and VP30 to form the nucleocapsid. Also interacts with VP24 and VP40 (By similarity).</text>
</comment>
<comment type="subcellular location">
    <subcellularLocation>
        <location>Virion</location>
    </subcellularLocation>
    <subcellularLocation>
        <location evidence="1">Host cytoplasm</location>
    </subcellularLocation>
</comment>
<comment type="domain">
    <text evidence="1">This protein can be divided into a hydrophobic N-terminal half, and a hydrophilic and highly acidic C-terminal half.</text>
</comment>
<comment type="domain">
    <text evidence="1">The coiled coil region is critical for homooligomerization, for the interaction with VP35 and for NP function in RNA synthesis.</text>
</comment>
<comment type="domain">
    <text evidence="1">Late-budding domains (L domains) are short sequence motifs essential for viral particle budding. They recruit proteins of the host ESCRT machinery (Endosomal Sorting Complex Required for Transport) or ESCRT-associated proteins. Nucleoprotein contains one L domain: a PTAP/PSAP motif, which interacts with the UEV domain of TSG101 (By similarity).</text>
</comment>
<comment type="PTM">
    <text evidence="1">Phosphorylated.</text>
</comment>
<comment type="similarity">
    <text evidence="4">Belongs to the filoviruses nucleoprotein family.</text>
</comment>
<accession>P35263</accession>
<proteinExistence type="inferred from homology"/>
<gene>
    <name type="primary">NP</name>
</gene>
<keyword id="KW-0167">Capsid protein</keyword>
<keyword id="KW-0175">Coiled coil</keyword>
<keyword id="KW-1139">Helical capsid protein</keyword>
<keyword id="KW-1035">Host cytoplasm</keyword>
<keyword id="KW-0945">Host-virus interaction</keyword>
<keyword id="KW-0597">Phosphoprotein</keyword>
<keyword id="KW-0687">Ribonucleoprotein</keyword>
<keyword id="KW-0694">RNA-binding</keyword>
<keyword id="KW-1198">Viral budding</keyword>
<keyword id="KW-1187">Viral budding via the host ESCRT complexes</keyword>
<keyword id="KW-0543">Viral nucleoprotein</keyword>
<keyword id="KW-1188">Viral release from host cell</keyword>
<keyword id="KW-0946">Virion</keyword>
<name>NCAP_MABVP</name>
<sequence>MDLHSLLELGTKPTAPHVRNKKVILFDTNHQVSICNQIIDAINSGIDLGDLLEGGLLTLCVEHYYNSDKDKFNTSPIAKYLRDAGYEFDVVKNADATRFLDVIPNEPHYSPLILALKTLESTESQRGRIGLFLSFCSLFLPKLVVGDRASIEKALRQVTVHQEQGIVTYPNHWLTTGHMKVIFGILRSSFILKFVLIHQGVNLVTGHDAYDSIISNSVGQTRFSGLLIVKTVLEFILQKTDSGVTLHPLVRTSKVKNEVASFKQALSNLARHGEYAPFARVLNLSGINNLEHGLYPQLSAIALGVATAHGSTLAGVNVGEQYQQLREAAHDAEIKLQRRHEHQEIQAIAEDDEERKILEQFHLQKTEITHSQTLAVLSQKREKLARLAAEIENNIVEDQGFKQSQNQVSQSFLNDPTPVEVTVQARPINRPTALPPPVDNKIEHESTEDSSSSSSFVDLNDPFALLNEDEDTLDDSVMIPSTTSREFQGIPAPPRQSQDLNNSQGKQEDESTNPIKKQFLRYQELPPVQEDDESEYTTDSQESIDQPGSDNEQGVDLPPPPLYAQEKRQDPIQHPAVSSQDPFGSIGDVNGDILEPIRSPSSPSAPQEDTRAREAYELSPDFTNYEDNQQNWPQRVVTKKGRTFLYPNDLLQTNPPESLITALVEEYQNPVSAKELQADWPDMSFDERRHVAMNL</sequence>